<organism>
    <name type="scientific">Escherichia coli O7:K1 (strain IAI39 / ExPEC)</name>
    <dbReference type="NCBI Taxonomy" id="585057"/>
    <lineage>
        <taxon>Bacteria</taxon>
        <taxon>Pseudomonadati</taxon>
        <taxon>Pseudomonadota</taxon>
        <taxon>Gammaproteobacteria</taxon>
        <taxon>Enterobacterales</taxon>
        <taxon>Enterobacteriaceae</taxon>
        <taxon>Escherichia</taxon>
    </lineage>
</organism>
<evidence type="ECO:0000255" key="1">
    <source>
        <dbReference type="HAMAP-Rule" id="MF_00508"/>
    </source>
</evidence>
<evidence type="ECO:0000305" key="2"/>
<gene>
    <name evidence="1" type="primary">rpsJ</name>
    <name type="ordered locus">ECIAI39_3815</name>
</gene>
<sequence>MQNQRIRIRLKAFDHRLIDQATAEIVETAKRTGAQVRGPIPLPTRKERFTVLISPHVNKDARDQYEIRTHLRLVDIVEPTEKTVDALMRLDLAAGVDVQISLG</sequence>
<reference key="1">
    <citation type="journal article" date="2009" name="PLoS Genet.">
        <title>Organised genome dynamics in the Escherichia coli species results in highly diverse adaptive paths.</title>
        <authorList>
            <person name="Touchon M."/>
            <person name="Hoede C."/>
            <person name="Tenaillon O."/>
            <person name="Barbe V."/>
            <person name="Baeriswyl S."/>
            <person name="Bidet P."/>
            <person name="Bingen E."/>
            <person name="Bonacorsi S."/>
            <person name="Bouchier C."/>
            <person name="Bouvet O."/>
            <person name="Calteau A."/>
            <person name="Chiapello H."/>
            <person name="Clermont O."/>
            <person name="Cruveiller S."/>
            <person name="Danchin A."/>
            <person name="Diard M."/>
            <person name="Dossat C."/>
            <person name="Karoui M.E."/>
            <person name="Frapy E."/>
            <person name="Garry L."/>
            <person name="Ghigo J.M."/>
            <person name="Gilles A.M."/>
            <person name="Johnson J."/>
            <person name="Le Bouguenec C."/>
            <person name="Lescat M."/>
            <person name="Mangenot S."/>
            <person name="Martinez-Jehanne V."/>
            <person name="Matic I."/>
            <person name="Nassif X."/>
            <person name="Oztas S."/>
            <person name="Petit M.A."/>
            <person name="Pichon C."/>
            <person name="Rouy Z."/>
            <person name="Ruf C.S."/>
            <person name="Schneider D."/>
            <person name="Tourret J."/>
            <person name="Vacherie B."/>
            <person name="Vallenet D."/>
            <person name="Medigue C."/>
            <person name="Rocha E.P.C."/>
            <person name="Denamur E."/>
        </authorList>
    </citation>
    <scope>NUCLEOTIDE SEQUENCE [LARGE SCALE GENOMIC DNA]</scope>
    <source>
        <strain>IAI39 / ExPEC</strain>
    </source>
</reference>
<proteinExistence type="inferred from homology"/>
<accession>B7NLP0</accession>
<dbReference type="EMBL" id="CU928164">
    <property type="protein sequence ID" value="CAR19929.1"/>
    <property type="molecule type" value="Genomic_DNA"/>
</dbReference>
<dbReference type="RefSeq" id="WP_001181004.1">
    <property type="nucleotide sequence ID" value="NC_011750.1"/>
</dbReference>
<dbReference type="RefSeq" id="YP_002409712.1">
    <property type="nucleotide sequence ID" value="NC_011750.1"/>
</dbReference>
<dbReference type="SMR" id="B7NLP0"/>
<dbReference type="STRING" id="585057.ECIAI39_3815"/>
<dbReference type="GeneID" id="93778666"/>
<dbReference type="KEGG" id="ect:ECIAI39_3815"/>
<dbReference type="PATRIC" id="fig|585057.6.peg.3952"/>
<dbReference type="HOGENOM" id="CLU_122625_1_3_6"/>
<dbReference type="Proteomes" id="UP000000749">
    <property type="component" value="Chromosome"/>
</dbReference>
<dbReference type="GO" id="GO:1990904">
    <property type="term" value="C:ribonucleoprotein complex"/>
    <property type="evidence" value="ECO:0007669"/>
    <property type="project" value="UniProtKB-KW"/>
</dbReference>
<dbReference type="GO" id="GO:0005840">
    <property type="term" value="C:ribosome"/>
    <property type="evidence" value="ECO:0007669"/>
    <property type="project" value="UniProtKB-KW"/>
</dbReference>
<dbReference type="GO" id="GO:0003735">
    <property type="term" value="F:structural constituent of ribosome"/>
    <property type="evidence" value="ECO:0007669"/>
    <property type="project" value="InterPro"/>
</dbReference>
<dbReference type="GO" id="GO:0000049">
    <property type="term" value="F:tRNA binding"/>
    <property type="evidence" value="ECO:0007669"/>
    <property type="project" value="UniProtKB-UniRule"/>
</dbReference>
<dbReference type="GO" id="GO:0006412">
    <property type="term" value="P:translation"/>
    <property type="evidence" value="ECO:0007669"/>
    <property type="project" value="UniProtKB-UniRule"/>
</dbReference>
<dbReference type="FunFam" id="3.30.70.600:FF:000001">
    <property type="entry name" value="30S ribosomal protein S10"/>
    <property type="match status" value="1"/>
</dbReference>
<dbReference type="Gene3D" id="3.30.70.600">
    <property type="entry name" value="Ribosomal protein S10 domain"/>
    <property type="match status" value="1"/>
</dbReference>
<dbReference type="HAMAP" id="MF_00508">
    <property type="entry name" value="Ribosomal_uS10"/>
    <property type="match status" value="1"/>
</dbReference>
<dbReference type="InterPro" id="IPR001848">
    <property type="entry name" value="Ribosomal_uS10"/>
</dbReference>
<dbReference type="InterPro" id="IPR018268">
    <property type="entry name" value="Ribosomal_uS10_CS"/>
</dbReference>
<dbReference type="InterPro" id="IPR027486">
    <property type="entry name" value="Ribosomal_uS10_dom"/>
</dbReference>
<dbReference type="InterPro" id="IPR036838">
    <property type="entry name" value="Ribosomal_uS10_dom_sf"/>
</dbReference>
<dbReference type="NCBIfam" id="NF001861">
    <property type="entry name" value="PRK00596.1"/>
    <property type="match status" value="1"/>
</dbReference>
<dbReference type="NCBIfam" id="TIGR01049">
    <property type="entry name" value="rpsJ_bact"/>
    <property type="match status" value="1"/>
</dbReference>
<dbReference type="PANTHER" id="PTHR11700">
    <property type="entry name" value="30S RIBOSOMAL PROTEIN S10 FAMILY MEMBER"/>
    <property type="match status" value="1"/>
</dbReference>
<dbReference type="Pfam" id="PF00338">
    <property type="entry name" value="Ribosomal_S10"/>
    <property type="match status" value="1"/>
</dbReference>
<dbReference type="PRINTS" id="PR00971">
    <property type="entry name" value="RIBOSOMALS10"/>
</dbReference>
<dbReference type="SMART" id="SM01403">
    <property type="entry name" value="Ribosomal_S10"/>
    <property type="match status" value="1"/>
</dbReference>
<dbReference type="SUPFAM" id="SSF54999">
    <property type="entry name" value="Ribosomal protein S10"/>
    <property type="match status" value="1"/>
</dbReference>
<dbReference type="PROSITE" id="PS00361">
    <property type="entry name" value="RIBOSOMAL_S10"/>
    <property type="match status" value="1"/>
</dbReference>
<feature type="chain" id="PRO_1000127118" description="Small ribosomal subunit protein uS10">
    <location>
        <begin position="1"/>
        <end position="103"/>
    </location>
</feature>
<comment type="function">
    <text evidence="1">Involved in the binding of tRNA to the ribosomes.</text>
</comment>
<comment type="subunit">
    <text evidence="1">Part of the 30S ribosomal subunit.</text>
</comment>
<comment type="similarity">
    <text evidence="1">Belongs to the universal ribosomal protein uS10 family.</text>
</comment>
<keyword id="KW-0687">Ribonucleoprotein</keyword>
<keyword id="KW-0689">Ribosomal protein</keyword>
<protein>
    <recommendedName>
        <fullName evidence="1">Small ribosomal subunit protein uS10</fullName>
    </recommendedName>
    <alternativeName>
        <fullName evidence="2">30S ribosomal protein S10</fullName>
    </alternativeName>
</protein>
<name>RS10_ECO7I</name>